<reference key="1">
    <citation type="journal article" date="2009" name="Mol. Biol. Evol.">
        <title>Molecular evolution, functional variation, and proposed nomenclature of the gene family that includes sphingomyelinase D in sicariid spider venoms.</title>
        <authorList>
            <person name="Binford G.J."/>
            <person name="Bodner M.R."/>
            <person name="Cordes M.H."/>
            <person name="Baldwin K.L."/>
            <person name="Rynerson M.R."/>
            <person name="Burns S.N."/>
            <person name="Zobel-Thropp P.A."/>
        </authorList>
    </citation>
    <scope>NUCLEOTIDE SEQUENCE [MRNA]</scope>
    <scope>NOMENCLATURE</scope>
    <source>
        <tissue>Venom gland</tissue>
    </source>
</reference>
<accession>C0JAZ6</accession>
<proteinExistence type="evidence at transcript level"/>
<name>A1OB3_LOXVA</name>
<evidence type="ECO:0000250" key="1">
    <source>
        <dbReference type="UniProtKB" id="A0A0D4WTV1"/>
    </source>
</evidence>
<evidence type="ECO:0000250" key="2">
    <source>
        <dbReference type="UniProtKB" id="A0A0D4WV12"/>
    </source>
</evidence>
<evidence type="ECO:0000250" key="3">
    <source>
        <dbReference type="UniProtKB" id="P0CE80"/>
    </source>
</evidence>
<evidence type="ECO:0000250" key="4">
    <source>
        <dbReference type="UniProtKB" id="Q4ZFU2"/>
    </source>
</evidence>
<evidence type="ECO:0000250" key="5">
    <source>
        <dbReference type="UniProtKB" id="Q8I914"/>
    </source>
</evidence>
<evidence type="ECO:0000303" key="6">
    <source>
    </source>
</evidence>
<evidence type="ECO:0000305" key="7"/>
<evidence type="ECO:0000305" key="8">
    <source>
    </source>
</evidence>
<feature type="chain" id="PRO_0000392812" description="Dermonecrotic toxin LvSicTox-alphaIC1biii">
    <location>
        <begin position="1" status="less than"/>
        <end position="272"/>
    </location>
</feature>
<feature type="active site" evidence="5">
    <location>
        <position position="5"/>
    </location>
</feature>
<feature type="active site" description="Nucleophile" evidence="5">
    <location>
        <position position="41"/>
    </location>
</feature>
<feature type="binding site" evidence="5">
    <location>
        <position position="25"/>
    </location>
    <ligand>
        <name>Mg(2+)</name>
        <dbReference type="ChEBI" id="CHEBI:18420"/>
    </ligand>
</feature>
<feature type="binding site" evidence="5">
    <location>
        <position position="27"/>
    </location>
    <ligand>
        <name>Mg(2+)</name>
        <dbReference type="ChEBI" id="CHEBI:18420"/>
    </ligand>
</feature>
<feature type="binding site" evidence="5">
    <location>
        <position position="84"/>
    </location>
    <ligand>
        <name>Mg(2+)</name>
        <dbReference type="ChEBI" id="CHEBI:18420"/>
    </ligand>
</feature>
<feature type="disulfide bond" evidence="3">
    <location>
        <begin position="45"/>
        <end position="51"/>
    </location>
</feature>
<feature type="disulfide bond" evidence="3">
    <location>
        <begin position="47"/>
        <end position="189"/>
    </location>
</feature>
<feature type="non-terminal residue">
    <location>
        <position position="1"/>
    </location>
</feature>
<keyword id="KW-0204">Cytolysis</keyword>
<keyword id="KW-1061">Dermonecrotic toxin</keyword>
<keyword id="KW-1015">Disulfide bond</keyword>
<keyword id="KW-0354">Hemolysis</keyword>
<keyword id="KW-0442">Lipid degradation</keyword>
<keyword id="KW-0443">Lipid metabolism</keyword>
<keyword id="KW-0456">Lyase</keyword>
<keyword id="KW-0460">Magnesium</keyword>
<keyword id="KW-0479">Metal-binding</keyword>
<keyword id="KW-0964">Secreted</keyword>
<keyword id="KW-0800">Toxin</keyword>
<dbReference type="EC" id="4.6.1.-" evidence="4"/>
<dbReference type="EMBL" id="FJ171431">
    <property type="protein sequence ID" value="ACN48927.1"/>
    <property type="molecule type" value="mRNA"/>
</dbReference>
<dbReference type="SMR" id="C0JAZ6"/>
<dbReference type="GO" id="GO:0005576">
    <property type="term" value="C:extracellular region"/>
    <property type="evidence" value="ECO:0007669"/>
    <property type="project" value="UniProtKB-SubCell"/>
</dbReference>
<dbReference type="GO" id="GO:0016829">
    <property type="term" value="F:lyase activity"/>
    <property type="evidence" value="ECO:0007669"/>
    <property type="project" value="UniProtKB-KW"/>
</dbReference>
<dbReference type="GO" id="GO:0046872">
    <property type="term" value="F:metal ion binding"/>
    <property type="evidence" value="ECO:0007669"/>
    <property type="project" value="UniProtKB-KW"/>
</dbReference>
<dbReference type="GO" id="GO:0008081">
    <property type="term" value="F:phosphoric diester hydrolase activity"/>
    <property type="evidence" value="ECO:0007669"/>
    <property type="project" value="InterPro"/>
</dbReference>
<dbReference type="GO" id="GO:0090729">
    <property type="term" value="F:toxin activity"/>
    <property type="evidence" value="ECO:0007669"/>
    <property type="project" value="UniProtKB-KW"/>
</dbReference>
<dbReference type="GO" id="GO:0031640">
    <property type="term" value="P:killing of cells of another organism"/>
    <property type="evidence" value="ECO:0007669"/>
    <property type="project" value="UniProtKB-KW"/>
</dbReference>
<dbReference type="GO" id="GO:0016042">
    <property type="term" value="P:lipid catabolic process"/>
    <property type="evidence" value="ECO:0007669"/>
    <property type="project" value="UniProtKB-KW"/>
</dbReference>
<dbReference type="CDD" id="cd08576">
    <property type="entry name" value="GDPD_like_SMaseD_PLD"/>
    <property type="match status" value="1"/>
</dbReference>
<dbReference type="Gene3D" id="3.20.20.190">
    <property type="entry name" value="Phosphatidylinositol (PI) phosphodiesterase"/>
    <property type="match status" value="1"/>
</dbReference>
<dbReference type="InterPro" id="IPR017946">
    <property type="entry name" value="PLC-like_Pdiesterase_TIM-brl"/>
</dbReference>
<dbReference type="SUPFAM" id="SSF51695">
    <property type="entry name" value="PLC-like phosphodiesterases"/>
    <property type="match status" value="1"/>
</dbReference>
<organism>
    <name type="scientific">Loxosceles variegata</name>
    <name type="common">Recluse spider</name>
    <dbReference type="NCBI Taxonomy" id="571533"/>
    <lineage>
        <taxon>Eukaryota</taxon>
        <taxon>Metazoa</taxon>
        <taxon>Ecdysozoa</taxon>
        <taxon>Arthropoda</taxon>
        <taxon>Chelicerata</taxon>
        <taxon>Arachnida</taxon>
        <taxon>Araneae</taxon>
        <taxon>Araneomorphae</taxon>
        <taxon>Haplogynae</taxon>
        <taxon>Scytodoidea</taxon>
        <taxon>Sicariidae</taxon>
        <taxon>Loxosceles</taxon>
    </lineage>
</organism>
<sequence length="272" mass="31042">WIMGHMVNNIKQIDEFVNLGSNAIETDVSFDKKANPEYTYHGTPCDCGRDCLRWEYFNDFVKALRTATTPGNSKYDKLFLVVFDLKTSSLYDYQASEAGTKLAKNLLQHYWNNGNNGGRAYIILSIPNLKHYKLITGFQQTLKDEGHAELLDKVGYDFSGNDDIGDVQKTYEKAGVTGHVWQSDGITNCLLRSFTRINAAVANRDSANGIINKVYYWTVDKRQTTRDTLDANVDGIMTNYPDITVEILNEDAYKTKFRIATYEDNPWETFKE</sequence>
<comment type="function">
    <text evidence="1 3">Dermonecrotic toxins cleave the phosphodiester linkage between the phosphate and headgroup of certain phospholipids (sphingolipid and lysolipid substrates), forming an alcohol (often choline) and a cyclic phosphate (By similarity). This toxin acts on sphingomyelin (SM) (By similarity). It may also act on ceramide phosphoethanolamine (CPE), lysophosphatidylcholine (LPC) and lysophosphatidylethanolamine (LPE), but not on lysophosphatidylserine (LPS), and lysophosphatidylglycerol (LPG) (By similarity). It acts by transphosphatidylation, releasing exclusively cyclic phosphate products as second products (By similarity). Induces dermonecrosis, hemolysis, increased vascular permeability, edema, inflammatory response, and platelet aggregation (By similarity).</text>
</comment>
<comment type="catalytic activity">
    <reaction evidence="1">
        <text>an N-(acyl)-sphingosylphosphocholine = an N-(acyl)-sphingosyl-1,3-cyclic phosphate + choline</text>
        <dbReference type="Rhea" id="RHEA:60652"/>
        <dbReference type="ChEBI" id="CHEBI:15354"/>
        <dbReference type="ChEBI" id="CHEBI:64583"/>
        <dbReference type="ChEBI" id="CHEBI:143892"/>
    </reaction>
</comment>
<comment type="catalytic activity">
    <reaction evidence="1">
        <text>an N-(acyl)-sphingosylphosphoethanolamine = an N-(acyl)-sphingosyl-1,3-cyclic phosphate + ethanolamine</text>
        <dbReference type="Rhea" id="RHEA:60648"/>
        <dbReference type="ChEBI" id="CHEBI:57603"/>
        <dbReference type="ChEBI" id="CHEBI:143891"/>
        <dbReference type="ChEBI" id="CHEBI:143892"/>
    </reaction>
</comment>
<comment type="catalytic activity">
    <reaction evidence="1">
        <text>a 1-acyl-sn-glycero-3-phosphocholine = a 1-acyl-sn-glycero-2,3-cyclic phosphate + choline</text>
        <dbReference type="Rhea" id="RHEA:60700"/>
        <dbReference type="ChEBI" id="CHEBI:15354"/>
        <dbReference type="ChEBI" id="CHEBI:58168"/>
        <dbReference type="ChEBI" id="CHEBI:143947"/>
    </reaction>
</comment>
<comment type="catalytic activity">
    <reaction evidence="1">
        <text>a 1-acyl-sn-glycero-3-phosphoethanolamine = a 1-acyl-sn-glycero-2,3-cyclic phosphate + ethanolamine</text>
        <dbReference type="Rhea" id="RHEA:60704"/>
        <dbReference type="ChEBI" id="CHEBI:57603"/>
        <dbReference type="ChEBI" id="CHEBI:64381"/>
        <dbReference type="ChEBI" id="CHEBI:143947"/>
    </reaction>
</comment>
<comment type="cofactor">
    <cofactor evidence="5">
        <name>Mg(2+)</name>
        <dbReference type="ChEBI" id="CHEBI:18420"/>
    </cofactor>
    <text evidence="5">Binds 1 Mg(2+) ion per subunit.</text>
</comment>
<comment type="subcellular location">
    <subcellularLocation>
        <location evidence="8">Secreted</location>
    </subcellularLocation>
</comment>
<comment type="tissue specificity">
    <text evidence="8">Expressed by the venom gland.</text>
</comment>
<comment type="similarity">
    <text evidence="7">Belongs to the arthropod phospholipase D family. Class II subfamily.</text>
</comment>
<comment type="caution">
    <text evidence="1 2 4">The most common activity assay for dermonecrotic toxins detects enzymatic activity by monitoring choline release from substrate. Liberation of choline from sphingomyelin (SM) or lysophosphatidylcholine (LPC) is commonly assumed to result from substrate hydrolysis, giving either ceramide-1-phosphate (C1P) or lysophosphatidic acid (LPA), respectively, as a second product. However, two studies from Lajoie and colleagues (2013 and 2015) report the observation of exclusive formation of cyclic phosphate products as second products, resulting from intramolecular transphosphatidylation. Cyclic phosphates have vastly different biological properties from their monoester counterparts, and they may be relevant to the pathology of brown spider envenomation.</text>
</comment>
<protein>
    <recommendedName>
        <fullName evidence="6">Dermonecrotic toxin LvSicTox-alphaIC1biii</fullName>
        <ecNumber evidence="4">4.6.1.-</ecNumber>
    </recommendedName>
    <alternativeName>
        <fullName>Phospholipase D</fullName>
        <shortName>PLD</shortName>
    </alternativeName>
    <alternativeName>
        <fullName>Sphingomyelin phosphodiesterase D</fullName>
        <shortName>SMD</shortName>
        <shortName>SMase D</shortName>
        <shortName>Sphingomyelinase D</shortName>
    </alternativeName>
</protein>